<accession>Q7W2T7</accession>
<sequence length="339" mass="37159">MNDAAPDRQASVDFHLQALHPWLSRQDIAEICVNRPGQLWYEDRNGWNRQESGALTLDHLHALATATARFCDRDICPERPLLAASLPGGERVQIVVPPACEPGTLSLTIRKPARRIWPLSELLRDTLDLPGVPGASQARPDPLLDPWRRGAWDDFLRLAVQAGKAILVAGQTGSGKTTLMNALSGEIPPRERIVTIEDVRELRLDPATNHVHLLYGTPTEGRTAAVSATELLRAALRMAPTRILLAELRGGEAFDFLQACASGHSGGISTCHAASADMALQRLTLMCMQHPNCQMLPYSTLRALVESVIDIVVVVERRAGQGARRRVVDIWYRDGLPAP</sequence>
<dbReference type="EMBL" id="BX640436">
    <property type="protein sequence ID" value="CAE39595.1"/>
    <property type="molecule type" value="Genomic_DNA"/>
</dbReference>
<dbReference type="RefSeq" id="WP_010929500.1">
    <property type="nucleotide sequence ID" value="NC_002928.3"/>
</dbReference>
<dbReference type="SMR" id="Q7W2T7"/>
<dbReference type="GeneID" id="69599979"/>
<dbReference type="GeneID" id="93206115"/>
<dbReference type="KEGG" id="bpa:BPP4316"/>
<dbReference type="HOGENOM" id="CLU_005379_3_1_4"/>
<dbReference type="Proteomes" id="UP000001421">
    <property type="component" value="Chromosome"/>
</dbReference>
<dbReference type="GO" id="GO:0043684">
    <property type="term" value="C:type IV secretion system complex"/>
    <property type="evidence" value="ECO:0007669"/>
    <property type="project" value="InterPro"/>
</dbReference>
<dbReference type="GO" id="GO:0016887">
    <property type="term" value="F:ATP hydrolysis activity"/>
    <property type="evidence" value="ECO:0007669"/>
    <property type="project" value="InterPro"/>
</dbReference>
<dbReference type="GO" id="GO:0044097">
    <property type="term" value="P:secretion by the type IV secretion system"/>
    <property type="evidence" value="ECO:0007669"/>
    <property type="project" value="InterPro"/>
</dbReference>
<dbReference type="CDD" id="cd01130">
    <property type="entry name" value="VirB11-like_ATPase"/>
    <property type="match status" value="1"/>
</dbReference>
<dbReference type="Gene3D" id="3.30.450.90">
    <property type="match status" value="1"/>
</dbReference>
<dbReference type="Gene3D" id="3.40.50.300">
    <property type="entry name" value="P-loop containing nucleotide triphosphate hydrolases"/>
    <property type="match status" value="1"/>
</dbReference>
<dbReference type="InterPro" id="IPR027417">
    <property type="entry name" value="P-loop_NTPase"/>
</dbReference>
<dbReference type="InterPro" id="IPR025662">
    <property type="entry name" value="Sigma_54_int_dom_ATP-bd_1"/>
</dbReference>
<dbReference type="InterPro" id="IPR001482">
    <property type="entry name" value="T2SS/T4SS_dom"/>
</dbReference>
<dbReference type="InterPro" id="IPR050921">
    <property type="entry name" value="T4SS_GSP_E_ATPase"/>
</dbReference>
<dbReference type="InterPro" id="IPR014155">
    <property type="entry name" value="VirB11"/>
</dbReference>
<dbReference type="NCBIfam" id="TIGR02788">
    <property type="entry name" value="VirB11"/>
    <property type="match status" value="1"/>
</dbReference>
<dbReference type="PANTHER" id="PTHR30486">
    <property type="entry name" value="TWITCHING MOTILITY PROTEIN PILT"/>
    <property type="match status" value="1"/>
</dbReference>
<dbReference type="PANTHER" id="PTHR30486:SF6">
    <property type="entry name" value="TYPE IV PILUS RETRACTATION ATPASE PILT"/>
    <property type="match status" value="1"/>
</dbReference>
<dbReference type="Pfam" id="PF00437">
    <property type="entry name" value="T2SSE"/>
    <property type="match status" value="1"/>
</dbReference>
<dbReference type="SUPFAM" id="SSF52540">
    <property type="entry name" value="P-loop containing nucleoside triphosphate hydrolases"/>
    <property type="match status" value="1"/>
</dbReference>
<reference key="1">
    <citation type="journal article" date="2003" name="Nat. Genet.">
        <title>Comparative analysis of the genome sequences of Bordetella pertussis, Bordetella parapertussis and Bordetella bronchiseptica.</title>
        <authorList>
            <person name="Parkhill J."/>
            <person name="Sebaihia M."/>
            <person name="Preston A."/>
            <person name="Murphy L.D."/>
            <person name="Thomson N.R."/>
            <person name="Harris D.E."/>
            <person name="Holden M.T.G."/>
            <person name="Churcher C.M."/>
            <person name="Bentley S.D."/>
            <person name="Mungall K.L."/>
            <person name="Cerdeno-Tarraga A.-M."/>
            <person name="Temple L."/>
            <person name="James K.D."/>
            <person name="Harris B."/>
            <person name="Quail M.A."/>
            <person name="Achtman M."/>
            <person name="Atkin R."/>
            <person name="Baker S."/>
            <person name="Basham D."/>
            <person name="Bason N."/>
            <person name="Cherevach I."/>
            <person name="Chillingworth T."/>
            <person name="Collins M."/>
            <person name="Cronin A."/>
            <person name="Davis P."/>
            <person name="Doggett J."/>
            <person name="Feltwell T."/>
            <person name="Goble A."/>
            <person name="Hamlin N."/>
            <person name="Hauser H."/>
            <person name="Holroyd S."/>
            <person name="Jagels K."/>
            <person name="Leather S."/>
            <person name="Moule S."/>
            <person name="Norberczak H."/>
            <person name="O'Neil S."/>
            <person name="Ormond D."/>
            <person name="Price C."/>
            <person name="Rabbinowitsch E."/>
            <person name="Rutter S."/>
            <person name="Sanders M."/>
            <person name="Saunders D."/>
            <person name="Seeger K."/>
            <person name="Sharp S."/>
            <person name="Simmonds M."/>
            <person name="Skelton J."/>
            <person name="Squares R."/>
            <person name="Squares S."/>
            <person name="Stevens K."/>
            <person name="Unwin L."/>
            <person name="Whitehead S."/>
            <person name="Barrell B.G."/>
            <person name="Maskell D.J."/>
        </authorList>
    </citation>
    <scope>NUCLEOTIDE SEQUENCE [LARGE SCALE GENOMIC DNA]</scope>
    <source>
        <strain>12822 / ATCC BAA-587 / NCTC 13253</strain>
    </source>
</reference>
<reference key="2">
    <citation type="journal article" date="1987" name="J. Bacteriol.">
        <title>Bordetella parapertussis and Bordetella bronchiseptica contain transcriptionally silent pertussis toxin genes.</title>
        <authorList>
            <person name="Arico B."/>
            <person name="Rappuoli R."/>
        </authorList>
    </citation>
    <scope>TRANSCRIPTIONAL SILENCING</scope>
    <source>
        <strain>ATCC 9305</strain>
    </source>
</reference>
<reference key="3">
    <citation type="journal article" date="1996" name="Infect. Immun.">
        <title>Analysis of proteins encoded by the ptx and ptl genes of Bordetella bronchiseptica and Bordetella parapertussis.</title>
        <authorList>
            <person name="Hausman S.Z."/>
            <person name="Cherry J.D."/>
            <person name="Heininger U."/>
            <person name="Wirsing von Koenig C.H."/>
            <person name="Burns D.L."/>
        </authorList>
    </citation>
    <scope>POSSIBLE EXPRESSION OF PTL AND PTX PROTEINS UNDER CONDITIONS DIFFERENT FROM B.PERTUSSIS EXPRESSION CONDITIONS</scope>
    <source>
        <strain>10978</strain>
        <strain>13449</strain>
    </source>
</reference>
<name>PTLH_BORPA</name>
<gene>
    <name type="primary">ptlH</name>
    <name type="ordered locus">BPP4316</name>
</gene>
<organism>
    <name type="scientific">Bordetella parapertussis (strain 12822 / ATCC BAA-587 / NCTC 13253)</name>
    <dbReference type="NCBI Taxonomy" id="257311"/>
    <lineage>
        <taxon>Bacteria</taxon>
        <taxon>Pseudomonadati</taxon>
        <taxon>Pseudomonadota</taxon>
        <taxon>Betaproteobacteria</taxon>
        <taxon>Burkholderiales</taxon>
        <taxon>Alcaligenaceae</taxon>
        <taxon>Bordetella</taxon>
    </lineage>
</organism>
<comment type="similarity">
    <text evidence="1">Belongs to the GSP E family.</text>
</comment>
<comment type="caution">
    <text evidence="1">B.parapertussis and B.bronchiseptica seem not to produce the pertussis toxin (S1, S2, S4, S5 and S3) and Ptl proteins (PtlA, PtlB, PtlC, PtlD, PtlE, PtlF, PtlG, PtlH and PtlI) in vivo due to changes in the promoter region of the ptx-ptl operon. However, it is possible that their promoter is active under certain, as-yet-undefined conditions and that B.parapertussis and B.bronchiseptica are therefore capable of producing these proteins.</text>
</comment>
<evidence type="ECO:0000305" key="1"/>
<feature type="chain" id="PRO_0000287418" description="Type IV secretion system protein PtlH homolog">
    <location>
        <begin position="1"/>
        <end position="339"/>
    </location>
</feature>
<proteinExistence type="inferred from homology"/>
<protein>
    <recommendedName>
        <fullName>Type IV secretion system protein PtlH homolog</fullName>
    </recommendedName>
</protein>